<protein>
    <recommendedName>
        <fullName>Alpha-lactalbumin</fullName>
    </recommendedName>
    <alternativeName>
        <fullName>Lactose synthase B protein</fullName>
    </alternativeName>
</protein>
<sequence length="140" mass="15957">MMSLLPLLLIGIVLPATQAKDYGKCELNQILRERGVDKVISLPELICTMFHSSGFSTETEVDNNNHKEYGIFQISSNGWCAEKQEDVERSVCGILCSKLLDDDITDDIVCAKKILQLPERLDHWKAHNTFCRENLDQWNC</sequence>
<feature type="signal peptide">
    <location>
        <begin position="1"/>
        <end position="19"/>
    </location>
</feature>
<feature type="chain" id="PRO_0000018451" description="Alpha-lactalbumin">
    <location>
        <begin position="20"/>
        <end position="140"/>
    </location>
</feature>
<feature type="domain" description="C-type lysozyme" evidence="2">
    <location>
        <begin position="20"/>
        <end position="140"/>
    </location>
</feature>
<feature type="binding site" evidence="1">
    <location>
        <position position="98"/>
    </location>
    <ligand>
        <name>Ca(2+)</name>
        <dbReference type="ChEBI" id="CHEBI:29108"/>
    </ligand>
</feature>
<feature type="binding site" evidence="1">
    <location>
        <position position="101"/>
    </location>
    <ligand>
        <name>Ca(2+)</name>
        <dbReference type="ChEBI" id="CHEBI:29108"/>
    </ligand>
</feature>
<feature type="binding site" evidence="1">
    <location>
        <position position="103"/>
    </location>
    <ligand>
        <name>Ca(2+)</name>
        <dbReference type="ChEBI" id="CHEBI:29108"/>
    </ligand>
</feature>
<feature type="binding site" evidence="1">
    <location>
        <position position="106"/>
    </location>
    <ligand>
        <name>Ca(2+)</name>
        <dbReference type="ChEBI" id="CHEBI:29108"/>
    </ligand>
</feature>
<feature type="binding site" evidence="1">
    <location>
        <position position="107"/>
    </location>
    <ligand>
        <name>Ca(2+)</name>
        <dbReference type="ChEBI" id="CHEBI:29108"/>
    </ligand>
</feature>
<feature type="disulfide bond" evidence="2">
    <location>
        <begin position="25"/>
        <end position="140"/>
    </location>
</feature>
<feature type="disulfide bond" evidence="2">
    <location>
        <begin position="47"/>
        <end position="131"/>
    </location>
</feature>
<feature type="disulfide bond" evidence="2">
    <location>
        <begin position="80"/>
        <end position="96"/>
    </location>
</feature>
<feature type="disulfide bond" evidence="2">
    <location>
        <begin position="92"/>
        <end position="110"/>
    </location>
</feature>
<name>LALBA_TRIVU</name>
<dbReference type="EMBL" id="U34288">
    <property type="protein sequence ID" value="AAB97108.1"/>
    <property type="molecule type" value="mRNA"/>
</dbReference>
<dbReference type="SMR" id="Q29145"/>
<dbReference type="GO" id="GO:0005576">
    <property type="term" value="C:extracellular region"/>
    <property type="evidence" value="ECO:0007669"/>
    <property type="project" value="UniProtKB-SubCell"/>
</dbReference>
<dbReference type="GO" id="GO:0005509">
    <property type="term" value="F:calcium ion binding"/>
    <property type="evidence" value="ECO:0007669"/>
    <property type="project" value="InterPro"/>
</dbReference>
<dbReference type="GO" id="GO:0004461">
    <property type="term" value="F:lactose synthase activity"/>
    <property type="evidence" value="ECO:0007669"/>
    <property type="project" value="InterPro"/>
</dbReference>
<dbReference type="GO" id="GO:0003796">
    <property type="term" value="F:lysozyme activity"/>
    <property type="evidence" value="ECO:0007669"/>
    <property type="project" value="TreeGrafter"/>
</dbReference>
<dbReference type="GO" id="GO:0050829">
    <property type="term" value="P:defense response to Gram-negative bacterium"/>
    <property type="evidence" value="ECO:0007669"/>
    <property type="project" value="TreeGrafter"/>
</dbReference>
<dbReference type="GO" id="GO:0050830">
    <property type="term" value="P:defense response to Gram-positive bacterium"/>
    <property type="evidence" value="ECO:0007669"/>
    <property type="project" value="TreeGrafter"/>
</dbReference>
<dbReference type="GO" id="GO:0005989">
    <property type="term" value="P:lactose biosynthetic process"/>
    <property type="evidence" value="ECO:0007669"/>
    <property type="project" value="UniProtKB-KW"/>
</dbReference>
<dbReference type="Gene3D" id="1.10.530.10">
    <property type="match status" value="1"/>
</dbReference>
<dbReference type="InterPro" id="IPR001916">
    <property type="entry name" value="Glyco_hydro_22"/>
</dbReference>
<dbReference type="InterPro" id="IPR019799">
    <property type="entry name" value="Glyco_hydro_22_CS"/>
</dbReference>
<dbReference type="InterPro" id="IPR000545">
    <property type="entry name" value="Lactalbumin"/>
</dbReference>
<dbReference type="InterPro" id="IPR023346">
    <property type="entry name" value="Lysozyme-like_dom_sf"/>
</dbReference>
<dbReference type="PANTHER" id="PTHR11407:SF32">
    <property type="entry name" value="ALPHA-LACTALBUMIN"/>
    <property type="match status" value="1"/>
</dbReference>
<dbReference type="PANTHER" id="PTHR11407">
    <property type="entry name" value="LYSOZYME C"/>
    <property type="match status" value="1"/>
</dbReference>
<dbReference type="Pfam" id="PF00062">
    <property type="entry name" value="Lys"/>
    <property type="match status" value="1"/>
</dbReference>
<dbReference type="PRINTS" id="PR00136">
    <property type="entry name" value="LACTALBUMIN"/>
</dbReference>
<dbReference type="PRINTS" id="PR00135">
    <property type="entry name" value="LYZLACT"/>
</dbReference>
<dbReference type="SMART" id="SM00263">
    <property type="entry name" value="LYZ1"/>
    <property type="match status" value="1"/>
</dbReference>
<dbReference type="SUPFAM" id="SSF53955">
    <property type="entry name" value="Lysozyme-like"/>
    <property type="match status" value="1"/>
</dbReference>
<dbReference type="PROSITE" id="PS00128">
    <property type="entry name" value="GLYCOSYL_HYDROL_F22_1"/>
    <property type="match status" value="1"/>
</dbReference>
<dbReference type="PROSITE" id="PS51348">
    <property type="entry name" value="GLYCOSYL_HYDROL_F22_2"/>
    <property type="match status" value="1"/>
</dbReference>
<comment type="function">
    <text>Regulatory subunit of lactose synthase, changes the substrate specificity of galactosyltransferase in the mammary gland making glucose a good acceptor substrate for this enzyme. This enables LS to synthesize lactose, the major carbohydrate component of milk. In other tissues, galactosyltransferase transfers galactose onto the N-acetylglucosamine of the oligosaccharide chains in glycoproteins.</text>
</comment>
<comment type="subunit">
    <text>Lactose synthase (LS) is a heterodimer of a catalytic component, beta1,4-galactosyltransferase (beta4Gal-T1) and a regulatory component, alpha-lactalbumin (LA).</text>
</comment>
<comment type="subcellular location">
    <subcellularLocation>
        <location>Secreted</location>
    </subcellularLocation>
</comment>
<comment type="tissue specificity">
    <text>Mammary gland specific. Secreted in milk.</text>
</comment>
<comment type="mass spectrometry" mass="13985.0" method="MALDI" evidence="3"/>
<comment type="similarity">
    <text evidence="2">Belongs to the glycosyl hydrolase 22 family.</text>
</comment>
<gene>
    <name type="primary">LALBA</name>
</gene>
<reference key="1">
    <citation type="journal article" date="1997" name="Biochim. Biophys. Acta">
        <title>Lysozyme and alpha-lactalbumin from the milk of a marsupial, the common brush-tailed possum (Trichosurus vulpecula).</title>
        <authorList>
            <person name="Piotte C.P."/>
            <person name="Marshall C.J."/>
            <person name="Hubbard M.J."/>
            <person name="Collet C."/>
            <person name="Grigor M.R."/>
        </authorList>
    </citation>
    <scope>NUCLEOTIDE SEQUENCE [MRNA]</scope>
    <scope>PARTIAL PROTEIN SEQUENCE</scope>
    <scope>MASS SPECTROMETRY</scope>
    <source>
        <tissue>Mammary gland</tissue>
    </source>
</reference>
<evidence type="ECO:0000250" key="1">
    <source>
        <dbReference type="UniProtKB" id="P00711"/>
    </source>
</evidence>
<evidence type="ECO:0000255" key="2">
    <source>
        <dbReference type="PROSITE-ProRule" id="PRU00680"/>
    </source>
</evidence>
<evidence type="ECO:0000269" key="3">
    <source>
    </source>
</evidence>
<accession>Q29145</accession>
<organism>
    <name type="scientific">Trichosurus vulpecula</name>
    <name type="common">Brush-tailed possum</name>
    <dbReference type="NCBI Taxonomy" id="9337"/>
    <lineage>
        <taxon>Eukaryota</taxon>
        <taxon>Metazoa</taxon>
        <taxon>Chordata</taxon>
        <taxon>Craniata</taxon>
        <taxon>Vertebrata</taxon>
        <taxon>Euteleostomi</taxon>
        <taxon>Mammalia</taxon>
        <taxon>Metatheria</taxon>
        <taxon>Diprotodontia</taxon>
        <taxon>Phalangeridae</taxon>
        <taxon>Trichosurus</taxon>
    </lineage>
</organism>
<keyword id="KW-0106">Calcium</keyword>
<keyword id="KW-0903">Direct protein sequencing</keyword>
<keyword id="KW-1015">Disulfide bond</keyword>
<keyword id="KW-0422">Lactose biosynthesis</keyword>
<keyword id="KW-0479">Metal-binding</keyword>
<keyword id="KW-0494">Milk protein</keyword>
<keyword id="KW-0964">Secreted</keyword>
<keyword id="KW-0732">Signal</keyword>
<proteinExistence type="evidence at protein level"/>